<protein>
    <recommendedName>
        <fullName>Hemoglobin subunit epsilon</fullName>
    </recommendedName>
    <alternativeName>
        <fullName>Epsilon-globin</fullName>
    </alternativeName>
    <alternativeName>
        <fullName>Hemoglobin epsilon chain</fullName>
    </alternativeName>
</protein>
<keyword id="KW-0349">Heme</keyword>
<keyword id="KW-0408">Iron</keyword>
<keyword id="KW-0479">Metal-binding</keyword>
<keyword id="KW-0561">Oxygen transport</keyword>
<keyword id="KW-0597">Phosphoprotein</keyword>
<keyword id="KW-0813">Transport</keyword>
<sequence>MVHFTAEEKVAITSLWSKMNVEEAGGEALGRLLVVYPWTQRFFDNFGNLSSPSAILGNPKVKAHGKKVLTSFGDAIKNMDNLKTTFAKLSELHCDKLHVDPENFRLLGNVMVIILATHFGKEFTPEVQAAWQKLVSAVAIALGHKYH</sequence>
<evidence type="ECO:0000250" key="1">
    <source>
        <dbReference type="UniProtKB" id="P02100"/>
    </source>
</evidence>
<evidence type="ECO:0000255" key="2">
    <source>
        <dbReference type="PROSITE-ProRule" id="PRU00238"/>
    </source>
</evidence>
<comment type="function">
    <text>The epsilon chain is a beta-type chain of early mammalian embryonic hemoglobin.</text>
</comment>
<comment type="subunit">
    <text>Heterotetramer of two alpha chains and two epsilon chains in early embryonic hemoglobin Gower-2; two zeta chains and two epsilon chains in early embryonic hemoglobin Gower-1.</text>
</comment>
<comment type="tissue specificity">
    <text>Red blood cells.</text>
</comment>
<comment type="similarity">
    <text evidence="2">Belongs to the globin family.</text>
</comment>
<feature type="chain" id="PRO_0000053202" description="Hemoglobin subunit epsilon">
    <location>
        <begin position="1"/>
        <end position="147"/>
    </location>
</feature>
<feature type="domain" description="Globin" evidence="2">
    <location>
        <begin position="3"/>
        <end position="147"/>
    </location>
</feature>
<feature type="binding site" description="distal binding residue" evidence="2">
    <location>
        <position position="64"/>
    </location>
    <ligand>
        <name>heme b</name>
        <dbReference type="ChEBI" id="CHEBI:60344"/>
    </ligand>
    <ligandPart>
        <name>Fe</name>
        <dbReference type="ChEBI" id="CHEBI:18248"/>
    </ligandPart>
</feature>
<feature type="binding site" description="proximal binding residue" evidence="2">
    <location>
        <position position="93"/>
    </location>
    <ligand>
        <name>heme b</name>
        <dbReference type="ChEBI" id="CHEBI:60344"/>
    </ligand>
    <ligandPart>
        <name>Fe</name>
        <dbReference type="ChEBI" id="CHEBI:18248"/>
    </ligandPart>
</feature>
<feature type="modified residue" description="Phosphoserine" evidence="1">
    <location>
        <position position="14"/>
    </location>
</feature>
<feature type="modified residue" description="Phosphoserine" evidence="1">
    <location>
        <position position="51"/>
    </location>
</feature>
<dbReference type="EMBL" id="U18610">
    <property type="protein sequence ID" value="AAB40982.1"/>
    <property type="molecule type" value="Genomic_DNA"/>
</dbReference>
<dbReference type="SMR" id="Q29415"/>
<dbReference type="GO" id="GO:0072562">
    <property type="term" value="C:blood microparticle"/>
    <property type="evidence" value="ECO:0007669"/>
    <property type="project" value="TreeGrafter"/>
</dbReference>
<dbReference type="GO" id="GO:0031838">
    <property type="term" value="C:haptoglobin-hemoglobin complex"/>
    <property type="evidence" value="ECO:0007669"/>
    <property type="project" value="TreeGrafter"/>
</dbReference>
<dbReference type="GO" id="GO:0005833">
    <property type="term" value="C:hemoglobin complex"/>
    <property type="evidence" value="ECO:0007669"/>
    <property type="project" value="InterPro"/>
</dbReference>
<dbReference type="GO" id="GO:0031720">
    <property type="term" value="F:haptoglobin binding"/>
    <property type="evidence" value="ECO:0007669"/>
    <property type="project" value="TreeGrafter"/>
</dbReference>
<dbReference type="GO" id="GO:0020037">
    <property type="term" value="F:heme binding"/>
    <property type="evidence" value="ECO:0007669"/>
    <property type="project" value="InterPro"/>
</dbReference>
<dbReference type="GO" id="GO:0031721">
    <property type="term" value="F:hemoglobin alpha binding"/>
    <property type="evidence" value="ECO:0007669"/>
    <property type="project" value="TreeGrafter"/>
</dbReference>
<dbReference type="GO" id="GO:0046872">
    <property type="term" value="F:metal ion binding"/>
    <property type="evidence" value="ECO:0007669"/>
    <property type="project" value="UniProtKB-KW"/>
</dbReference>
<dbReference type="GO" id="GO:0043177">
    <property type="term" value="F:organic acid binding"/>
    <property type="evidence" value="ECO:0007669"/>
    <property type="project" value="TreeGrafter"/>
</dbReference>
<dbReference type="GO" id="GO:0019825">
    <property type="term" value="F:oxygen binding"/>
    <property type="evidence" value="ECO:0007669"/>
    <property type="project" value="InterPro"/>
</dbReference>
<dbReference type="GO" id="GO:0005344">
    <property type="term" value="F:oxygen carrier activity"/>
    <property type="evidence" value="ECO:0007669"/>
    <property type="project" value="UniProtKB-KW"/>
</dbReference>
<dbReference type="GO" id="GO:0004601">
    <property type="term" value="F:peroxidase activity"/>
    <property type="evidence" value="ECO:0007669"/>
    <property type="project" value="TreeGrafter"/>
</dbReference>
<dbReference type="GO" id="GO:0042744">
    <property type="term" value="P:hydrogen peroxide catabolic process"/>
    <property type="evidence" value="ECO:0007669"/>
    <property type="project" value="TreeGrafter"/>
</dbReference>
<dbReference type="CDD" id="cd08925">
    <property type="entry name" value="Hb-beta-like"/>
    <property type="match status" value="1"/>
</dbReference>
<dbReference type="FunFam" id="1.10.490.10:FF:000001">
    <property type="entry name" value="Hemoglobin subunit beta"/>
    <property type="match status" value="1"/>
</dbReference>
<dbReference type="Gene3D" id="1.10.490.10">
    <property type="entry name" value="Globins"/>
    <property type="match status" value="1"/>
</dbReference>
<dbReference type="InterPro" id="IPR000971">
    <property type="entry name" value="Globin"/>
</dbReference>
<dbReference type="InterPro" id="IPR009050">
    <property type="entry name" value="Globin-like_sf"/>
</dbReference>
<dbReference type="InterPro" id="IPR012292">
    <property type="entry name" value="Globin/Proto"/>
</dbReference>
<dbReference type="InterPro" id="IPR002337">
    <property type="entry name" value="Hemoglobin_b"/>
</dbReference>
<dbReference type="InterPro" id="IPR050056">
    <property type="entry name" value="Hemoglobin_oxygen_transport"/>
</dbReference>
<dbReference type="PANTHER" id="PTHR11442">
    <property type="entry name" value="HEMOGLOBIN FAMILY MEMBER"/>
    <property type="match status" value="1"/>
</dbReference>
<dbReference type="PANTHER" id="PTHR11442:SF7">
    <property type="entry name" value="HEMOGLOBIN SUBUNIT EPSILON"/>
    <property type="match status" value="1"/>
</dbReference>
<dbReference type="Pfam" id="PF00042">
    <property type="entry name" value="Globin"/>
    <property type="match status" value="1"/>
</dbReference>
<dbReference type="PRINTS" id="PR00814">
    <property type="entry name" value="BETAHAEM"/>
</dbReference>
<dbReference type="SUPFAM" id="SSF46458">
    <property type="entry name" value="Globin-like"/>
    <property type="match status" value="1"/>
</dbReference>
<dbReference type="PROSITE" id="PS01033">
    <property type="entry name" value="GLOBIN"/>
    <property type="match status" value="1"/>
</dbReference>
<reference key="1">
    <citation type="journal article" date="1995" name="Mol. Phylogenet. Evol.">
        <title>DNA evidence on the phylogenetic systematics of New World monkeys: support for the sister-grouping of Cebus and Saimiri from two unlinked nuclear genes.</title>
        <authorList>
            <person name="Harada M.L."/>
            <person name="Schneider H."/>
            <person name="Schneider M.P.C."/>
            <person name="Sampaio I."/>
            <person name="Czelusniak J."/>
            <person name="Goodman M."/>
        </authorList>
    </citation>
    <scope>NUCLEOTIDE SEQUENCE [GENOMIC DNA]</scope>
    <source>
        <tissue>Lymphocyte</tissue>
    </source>
</reference>
<organism>
    <name type="scientific">Cebus olivaceus</name>
    <name type="common">Weeper capuchin</name>
    <dbReference type="NCBI Taxonomy" id="37295"/>
    <lineage>
        <taxon>Eukaryota</taxon>
        <taxon>Metazoa</taxon>
        <taxon>Chordata</taxon>
        <taxon>Craniata</taxon>
        <taxon>Vertebrata</taxon>
        <taxon>Euteleostomi</taxon>
        <taxon>Mammalia</taxon>
        <taxon>Eutheria</taxon>
        <taxon>Euarchontoglires</taxon>
        <taxon>Primates</taxon>
        <taxon>Haplorrhini</taxon>
        <taxon>Platyrrhini</taxon>
        <taxon>Cebidae</taxon>
        <taxon>Cebinae</taxon>
        <taxon>Cebus</taxon>
    </lineage>
</organism>
<accession>Q29415</accession>
<proteinExistence type="evidence at transcript level"/>
<gene>
    <name type="primary">HBE1</name>
</gene>
<name>HBE_CEBOL</name>